<feature type="chain" id="PRO_0000268265" description="Bifunctional protein FolD">
    <location>
        <begin position="1"/>
        <end position="286"/>
    </location>
</feature>
<feature type="binding site" evidence="1">
    <location>
        <begin position="165"/>
        <end position="167"/>
    </location>
    <ligand>
        <name>NADP(+)</name>
        <dbReference type="ChEBI" id="CHEBI:58349"/>
    </ligand>
</feature>
<feature type="binding site" evidence="1">
    <location>
        <position position="190"/>
    </location>
    <ligand>
        <name>NADP(+)</name>
        <dbReference type="ChEBI" id="CHEBI:58349"/>
    </ligand>
</feature>
<feature type="binding site" evidence="1">
    <location>
        <position position="231"/>
    </location>
    <ligand>
        <name>NADP(+)</name>
        <dbReference type="ChEBI" id="CHEBI:58349"/>
    </ligand>
</feature>
<gene>
    <name evidence="1" type="primary">folD</name>
    <name type="ordered locus">BA_4405</name>
    <name type="ordered locus">GBAA_4405</name>
    <name type="ordered locus">BAS4085</name>
</gene>
<proteinExistence type="inferred from homology"/>
<keyword id="KW-0028">Amino-acid biosynthesis</keyword>
<keyword id="KW-0368">Histidine biosynthesis</keyword>
<keyword id="KW-0378">Hydrolase</keyword>
<keyword id="KW-0486">Methionine biosynthesis</keyword>
<keyword id="KW-0511">Multifunctional enzyme</keyword>
<keyword id="KW-0521">NADP</keyword>
<keyword id="KW-0554">One-carbon metabolism</keyword>
<keyword id="KW-0560">Oxidoreductase</keyword>
<keyword id="KW-0658">Purine biosynthesis</keyword>
<keyword id="KW-1185">Reference proteome</keyword>
<accession>Q81M50</accession>
<accession>Q6HTK3</accession>
<accession>Q6KMU3</accession>
<protein>
    <recommendedName>
        <fullName evidence="1">Bifunctional protein FolD</fullName>
    </recommendedName>
    <domain>
        <recommendedName>
            <fullName evidence="1">Methylenetetrahydrofolate dehydrogenase</fullName>
            <ecNumber evidence="1">1.5.1.5</ecNumber>
        </recommendedName>
    </domain>
    <domain>
        <recommendedName>
            <fullName evidence="1">Methenyltetrahydrofolate cyclohydrolase</fullName>
            <ecNumber evidence="1">3.5.4.9</ecNumber>
        </recommendedName>
    </domain>
</protein>
<organism>
    <name type="scientific">Bacillus anthracis</name>
    <dbReference type="NCBI Taxonomy" id="1392"/>
    <lineage>
        <taxon>Bacteria</taxon>
        <taxon>Bacillati</taxon>
        <taxon>Bacillota</taxon>
        <taxon>Bacilli</taxon>
        <taxon>Bacillales</taxon>
        <taxon>Bacillaceae</taxon>
        <taxon>Bacillus</taxon>
        <taxon>Bacillus cereus group</taxon>
    </lineage>
</organism>
<dbReference type="EC" id="1.5.1.5" evidence="1"/>
<dbReference type="EC" id="3.5.4.9" evidence="1"/>
<dbReference type="EMBL" id="AE016879">
    <property type="protein sequence ID" value="AAP28119.1"/>
    <property type="molecule type" value="Genomic_DNA"/>
</dbReference>
<dbReference type="EMBL" id="AE017225">
    <property type="protein sequence ID" value="AAT56386.1"/>
    <property type="molecule type" value="Genomic_DNA"/>
</dbReference>
<dbReference type="EMBL" id="AE017334">
    <property type="protein sequence ID" value="AAT33523.1"/>
    <property type="molecule type" value="Genomic_DNA"/>
</dbReference>
<dbReference type="RefSeq" id="NP_846633.1">
    <property type="nucleotide sequence ID" value="NC_003997.3"/>
</dbReference>
<dbReference type="RefSeq" id="WP_000226722.1">
    <property type="nucleotide sequence ID" value="NZ_WXXJ01000027.1"/>
</dbReference>
<dbReference type="RefSeq" id="YP_030335.1">
    <property type="nucleotide sequence ID" value="NC_005945.1"/>
</dbReference>
<dbReference type="SMR" id="Q81M50"/>
<dbReference type="STRING" id="261594.GBAA_4405"/>
<dbReference type="DNASU" id="1087731"/>
<dbReference type="GeneID" id="45024064"/>
<dbReference type="KEGG" id="ban:BA_4405"/>
<dbReference type="KEGG" id="banh:HYU01_21495"/>
<dbReference type="KEGG" id="bar:GBAA_4405"/>
<dbReference type="KEGG" id="bat:BAS4085"/>
<dbReference type="PATRIC" id="fig|198094.11.peg.4373"/>
<dbReference type="eggNOG" id="COG0190">
    <property type="taxonomic scope" value="Bacteria"/>
</dbReference>
<dbReference type="HOGENOM" id="CLU_034045_2_1_9"/>
<dbReference type="OMA" id="VCHILTK"/>
<dbReference type="OrthoDB" id="9803580at2"/>
<dbReference type="UniPathway" id="UPA00193"/>
<dbReference type="Proteomes" id="UP000000427">
    <property type="component" value="Chromosome"/>
</dbReference>
<dbReference type="Proteomes" id="UP000000594">
    <property type="component" value="Chromosome"/>
</dbReference>
<dbReference type="GO" id="GO:0005829">
    <property type="term" value="C:cytosol"/>
    <property type="evidence" value="ECO:0007669"/>
    <property type="project" value="TreeGrafter"/>
</dbReference>
<dbReference type="GO" id="GO:0004477">
    <property type="term" value="F:methenyltetrahydrofolate cyclohydrolase activity"/>
    <property type="evidence" value="ECO:0007669"/>
    <property type="project" value="UniProtKB-UniRule"/>
</dbReference>
<dbReference type="GO" id="GO:0004488">
    <property type="term" value="F:methylenetetrahydrofolate dehydrogenase (NADP+) activity"/>
    <property type="evidence" value="ECO:0007669"/>
    <property type="project" value="UniProtKB-UniRule"/>
</dbReference>
<dbReference type="GO" id="GO:0000105">
    <property type="term" value="P:L-histidine biosynthetic process"/>
    <property type="evidence" value="ECO:0007669"/>
    <property type="project" value="UniProtKB-KW"/>
</dbReference>
<dbReference type="GO" id="GO:0009086">
    <property type="term" value="P:methionine biosynthetic process"/>
    <property type="evidence" value="ECO:0007669"/>
    <property type="project" value="UniProtKB-KW"/>
</dbReference>
<dbReference type="GO" id="GO:0006164">
    <property type="term" value="P:purine nucleotide biosynthetic process"/>
    <property type="evidence" value="ECO:0007669"/>
    <property type="project" value="UniProtKB-KW"/>
</dbReference>
<dbReference type="GO" id="GO:0035999">
    <property type="term" value="P:tetrahydrofolate interconversion"/>
    <property type="evidence" value="ECO:0007669"/>
    <property type="project" value="UniProtKB-UniRule"/>
</dbReference>
<dbReference type="CDD" id="cd01080">
    <property type="entry name" value="NAD_bind_m-THF_DH_Cyclohyd"/>
    <property type="match status" value="1"/>
</dbReference>
<dbReference type="FunFam" id="3.40.50.10860:FF:000001">
    <property type="entry name" value="Bifunctional protein FolD"/>
    <property type="match status" value="1"/>
</dbReference>
<dbReference type="FunFam" id="3.40.50.720:FF:000006">
    <property type="entry name" value="Bifunctional protein FolD"/>
    <property type="match status" value="1"/>
</dbReference>
<dbReference type="Gene3D" id="3.40.50.10860">
    <property type="entry name" value="Leucine Dehydrogenase, chain A, domain 1"/>
    <property type="match status" value="1"/>
</dbReference>
<dbReference type="Gene3D" id="3.40.50.720">
    <property type="entry name" value="NAD(P)-binding Rossmann-like Domain"/>
    <property type="match status" value="1"/>
</dbReference>
<dbReference type="HAMAP" id="MF_01576">
    <property type="entry name" value="THF_DHG_CYH"/>
    <property type="match status" value="1"/>
</dbReference>
<dbReference type="InterPro" id="IPR046346">
    <property type="entry name" value="Aminoacid_DH-like_N_sf"/>
</dbReference>
<dbReference type="InterPro" id="IPR036291">
    <property type="entry name" value="NAD(P)-bd_dom_sf"/>
</dbReference>
<dbReference type="InterPro" id="IPR000672">
    <property type="entry name" value="THF_DH/CycHdrlase"/>
</dbReference>
<dbReference type="InterPro" id="IPR020630">
    <property type="entry name" value="THF_DH/CycHdrlase_cat_dom"/>
</dbReference>
<dbReference type="InterPro" id="IPR020867">
    <property type="entry name" value="THF_DH/CycHdrlase_CS"/>
</dbReference>
<dbReference type="InterPro" id="IPR020631">
    <property type="entry name" value="THF_DH/CycHdrlase_NAD-bd_dom"/>
</dbReference>
<dbReference type="NCBIfam" id="NF008058">
    <property type="entry name" value="PRK10792.1"/>
    <property type="match status" value="1"/>
</dbReference>
<dbReference type="NCBIfam" id="NF010783">
    <property type="entry name" value="PRK14186.1"/>
    <property type="match status" value="1"/>
</dbReference>
<dbReference type="PANTHER" id="PTHR48099:SF5">
    <property type="entry name" value="C-1-TETRAHYDROFOLATE SYNTHASE, CYTOPLASMIC"/>
    <property type="match status" value="1"/>
</dbReference>
<dbReference type="PANTHER" id="PTHR48099">
    <property type="entry name" value="C-1-TETRAHYDROFOLATE SYNTHASE, CYTOPLASMIC-RELATED"/>
    <property type="match status" value="1"/>
</dbReference>
<dbReference type="Pfam" id="PF00763">
    <property type="entry name" value="THF_DHG_CYH"/>
    <property type="match status" value="1"/>
</dbReference>
<dbReference type="Pfam" id="PF02882">
    <property type="entry name" value="THF_DHG_CYH_C"/>
    <property type="match status" value="1"/>
</dbReference>
<dbReference type="PRINTS" id="PR00085">
    <property type="entry name" value="THFDHDRGNASE"/>
</dbReference>
<dbReference type="SUPFAM" id="SSF53223">
    <property type="entry name" value="Aminoacid dehydrogenase-like, N-terminal domain"/>
    <property type="match status" value="1"/>
</dbReference>
<dbReference type="SUPFAM" id="SSF51735">
    <property type="entry name" value="NAD(P)-binding Rossmann-fold domains"/>
    <property type="match status" value="1"/>
</dbReference>
<dbReference type="PROSITE" id="PS00767">
    <property type="entry name" value="THF_DHG_CYH_2"/>
    <property type="match status" value="1"/>
</dbReference>
<evidence type="ECO:0000255" key="1">
    <source>
        <dbReference type="HAMAP-Rule" id="MF_01576"/>
    </source>
</evidence>
<comment type="function">
    <text evidence="1">Catalyzes the oxidation of 5,10-methylenetetrahydrofolate to 5,10-methenyltetrahydrofolate and then the hydrolysis of 5,10-methenyltetrahydrofolate to 10-formyltetrahydrofolate.</text>
</comment>
<comment type="catalytic activity">
    <reaction evidence="1">
        <text>(6R)-5,10-methylene-5,6,7,8-tetrahydrofolate + NADP(+) = (6R)-5,10-methenyltetrahydrofolate + NADPH</text>
        <dbReference type="Rhea" id="RHEA:22812"/>
        <dbReference type="ChEBI" id="CHEBI:15636"/>
        <dbReference type="ChEBI" id="CHEBI:57455"/>
        <dbReference type="ChEBI" id="CHEBI:57783"/>
        <dbReference type="ChEBI" id="CHEBI:58349"/>
        <dbReference type="EC" id="1.5.1.5"/>
    </reaction>
</comment>
<comment type="catalytic activity">
    <reaction evidence="1">
        <text>(6R)-5,10-methenyltetrahydrofolate + H2O = (6R)-10-formyltetrahydrofolate + H(+)</text>
        <dbReference type="Rhea" id="RHEA:23700"/>
        <dbReference type="ChEBI" id="CHEBI:15377"/>
        <dbReference type="ChEBI" id="CHEBI:15378"/>
        <dbReference type="ChEBI" id="CHEBI:57455"/>
        <dbReference type="ChEBI" id="CHEBI:195366"/>
        <dbReference type="EC" id="3.5.4.9"/>
    </reaction>
</comment>
<comment type="pathway">
    <text evidence="1">One-carbon metabolism; tetrahydrofolate interconversion.</text>
</comment>
<comment type="subunit">
    <text evidence="1">Homodimer.</text>
</comment>
<comment type="similarity">
    <text evidence="1">Belongs to the tetrahydrofolate dehydrogenase/cyclohydrolase family.</text>
</comment>
<sequence length="286" mass="31181">MVAVIIKGNEVAEKKRAQLKEEVVKLKEQGIVPGLAVILVGEDPASRSYVKGKEKGCEQVGIYSELIEFPETITEERLLAEIDRLNGDDRINGILVQLPLPKHIEEKAIIERISPEKDVDGFHPISVGRMMTGQDTFLPCTPHGIVELVKETNLDISGKHVVVIGRSNIVGKPVGQLFLNENATVTYCHSKTQNMKELTKLADILIVAVGRPKMVTADYIKEGAVVIDVGVNRLETGKLCGDVDFDNVLDVASYITPVPKGVGPMTITMLLHNTVESAKRAGVVCK</sequence>
<name>FOLD_BACAN</name>
<reference key="1">
    <citation type="journal article" date="2003" name="Nature">
        <title>The genome sequence of Bacillus anthracis Ames and comparison to closely related bacteria.</title>
        <authorList>
            <person name="Read T.D."/>
            <person name="Peterson S.N."/>
            <person name="Tourasse N.J."/>
            <person name="Baillie L.W."/>
            <person name="Paulsen I.T."/>
            <person name="Nelson K.E."/>
            <person name="Tettelin H."/>
            <person name="Fouts D.E."/>
            <person name="Eisen J.A."/>
            <person name="Gill S.R."/>
            <person name="Holtzapple E.K."/>
            <person name="Okstad O.A."/>
            <person name="Helgason E."/>
            <person name="Rilstone J."/>
            <person name="Wu M."/>
            <person name="Kolonay J.F."/>
            <person name="Beanan M.J."/>
            <person name="Dodson R.J."/>
            <person name="Brinkac L.M."/>
            <person name="Gwinn M.L."/>
            <person name="DeBoy R.T."/>
            <person name="Madpu R."/>
            <person name="Daugherty S.C."/>
            <person name="Durkin A.S."/>
            <person name="Haft D.H."/>
            <person name="Nelson W.C."/>
            <person name="Peterson J.D."/>
            <person name="Pop M."/>
            <person name="Khouri H.M."/>
            <person name="Radune D."/>
            <person name="Benton J.L."/>
            <person name="Mahamoud Y."/>
            <person name="Jiang L."/>
            <person name="Hance I.R."/>
            <person name="Weidman J.F."/>
            <person name="Berry K.J."/>
            <person name="Plaut R.D."/>
            <person name="Wolf A.M."/>
            <person name="Watkins K.L."/>
            <person name="Nierman W.C."/>
            <person name="Hazen A."/>
            <person name="Cline R.T."/>
            <person name="Redmond C."/>
            <person name="Thwaite J.E."/>
            <person name="White O."/>
            <person name="Salzberg S.L."/>
            <person name="Thomason B."/>
            <person name="Friedlander A.M."/>
            <person name="Koehler T.M."/>
            <person name="Hanna P.C."/>
            <person name="Kolstoe A.-B."/>
            <person name="Fraser C.M."/>
        </authorList>
    </citation>
    <scope>NUCLEOTIDE SEQUENCE [LARGE SCALE GENOMIC DNA]</scope>
    <source>
        <strain>Ames / isolate Porton</strain>
    </source>
</reference>
<reference key="2">
    <citation type="submission" date="2004-01" db="EMBL/GenBank/DDBJ databases">
        <title>Complete genome sequence of Bacillus anthracis Sterne.</title>
        <authorList>
            <person name="Brettin T.S."/>
            <person name="Bruce D."/>
            <person name="Challacombe J.F."/>
            <person name="Gilna P."/>
            <person name="Han C."/>
            <person name="Hill K."/>
            <person name="Hitchcock P."/>
            <person name="Jackson P."/>
            <person name="Keim P."/>
            <person name="Longmire J."/>
            <person name="Lucas S."/>
            <person name="Okinaka R."/>
            <person name="Richardson P."/>
            <person name="Rubin E."/>
            <person name="Tice H."/>
        </authorList>
    </citation>
    <scope>NUCLEOTIDE SEQUENCE [LARGE SCALE GENOMIC DNA]</scope>
    <source>
        <strain>Sterne</strain>
    </source>
</reference>
<reference key="3">
    <citation type="journal article" date="2009" name="J. Bacteriol.">
        <title>The complete genome sequence of Bacillus anthracis Ames 'Ancestor'.</title>
        <authorList>
            <person name="Ravel J."/>
            <person name="Jiang L."/>
            <person name="Stanley S.T."/>
            <person name="Wilson M.R."/>
            <person name="Decker R.S."/>
            <person name="Read T.D."/>
            <person name="Worsham P."/>
            <person name="Keim P.S."/>
            <person name="Salzberg S.L."/>
            <person name="Fraser-Liggett C.M."/>
            <person name="Rasko D.A."/>
        </authorList>
    </citation>
    <scope>NUCLEOTIDE SEQUENCE [LARGE SCALE GENOMIC DNA]</scope>
    <source>
        <strain>Ames ancestor</strain>
    </source>
</reference>